<accession>P94383</accession>
<accession>Q797Q9</accession>
<comment type="subcellular location">
    <subcellularLocation>
        <location>Cell membrane</location>
        <topology>Multi-pass membrane protein</topology>
    </subcellularLocation>
</comment>
<comment type="similarity">
    <text evidence="2">Belongs to the amino acid-polyamine-organocation (APC) superfamily.</text>
</comment>
<comment type="sequence caution" evidence="2">
    <conflict type="erroneous termination">
        <sequence resource="EMBL-CDS" id="BAA08945"/>
    </conflict>
    <text>Truncated C-terminus.</text>
</comment>
<comment type="sequence caution" evidence="2">
    <conflict type="frameshift">
        <sequence resource="EMBL-CDS" id="BAA08945"/>
    </conflict>
</comment>
<protein>
    <recommendedName>
        <fullName>Uncharacterized transporter YcgH</fullName>
    </recommendedName>
</protein>
<sequence length="446" mass="48504">MSQTKKDQPKGNLAWWQLSLIGVGCTIGTGFFLGSSIAIVKSGFSVLLSFLIAGIGTYFVFEQLAKLSAKQPEKGSFCAYARKAFGKWAGFSNGWVYWTSEMLITGSQLTAISLFTKHWFPQVPLWVFASIYAVLGLLIIFTGLSVFEKTENVLAVIKTAAIFMFIVIAILALCGILSGGNHGIHVPNKTSEFFPYGAMGLWTGLIYAFYAFGGIEVMGLMAVHLKKPEEASKSGKLMLATLAIIYIISIGLALLLVPLHTFTEQDSPFITSLKGYNLEIILDIFNGIFIIAGFSTLVASLFAVTTLLCTMADDGDAPKCFTLKEGKKICWPALGLTFAGLVLSIILSLVLPKNIYEHMTTAAGLMLLYTWLFILFSSKKLTDPEGMGKTQIYLAMVLIAAAVSGTLFEKSSRPGFFVSIGFLVIIAIVTMIYQKKQGHKDRPASP</sequence>
<name>YCGH_BACSU</name>
<dbReference type="EMBL" id="D50453">
    <property type="protein sequence ID" value="BAA08945.1"/>
    <property type="status" value="ALT_SEQ"/>
    <property type="molecule type" value="Genomic_DNA"/>
</dbReference>
<dbReference type="EMBL" id="AL009126">
    <property type="protein sequence ID" value="CAB12105.2"/>
    <property type="molecule type" value="Genomic_DNA"/>
</dbReference>
<dbReference type="PIR" id="C69758">
    <property type="entry name" value="C69758"/>
</dbReference>
<dbReference type="RefSeq" id="NP_388193.2">
    <property type="nucleotide sequence ID" value="NC_000964.3"/>
</dbReference>
<dbReference type="RefSeq" id="WP_003246486.1">
    <property type="nucleotide sequence ID" value="NZ_OZ025638.1"/>
</dbReference>
<dbReference type="SMR" id="P94383"/>
<dbReference type="FunCoup" id="P94383">
    <property type="interactions" value="25"/>
</dbReference>
<dbReference type="STRING" id="224308.BSU03110"/>
<dbReference type="PaxDb" id="224308-BSU03110"/>
<dbReference type="EnsemblBacteria" id="CAB12105">
    <property type="protein sequence ID" value="CAB12105"/>
    <property type="gene ID" value="BSU_03110"/>
</dbReference>
<dbReference type="GeneID" id="938347"/>
<dbReference type="KEGG" id="bsu:BSU03110"/>
<dbReference type="PATRIC" id="fig|224308.179.peg.325"/>
<dbReference type="eggNOG" id="COG1113">
    <property type="taxonomic scope" value="Bacteria"/>
</dbReference>
<dbReference type="InParanoid" id="P94383"/>
<dbReference type="OrthoDB" id="9780162at2"/>
<dbReference type="PhylomeDB" id="P94383"/>
<dbReference type="BioCyc" id="BSUB:BSU03110-MONOMER"/>
<dbReference type="Proteomes" id="UP000001570">
    <property type="component" value="Chromosome"/>
</dbReference>
<dbReference type="GO" id="GO:0005886">
    <property type="term" value="C:plasma membrane"/>
    <property type="evidence" value="ECO:0007669"/>
    <property type="project" value="UniProtKB-SubCell"/>
</dbReference>
<dbReference type="GO" id="GO:0006865">
    <property type="term" value="P:amino acid transport"/>
    <property type="evidence" value="ECO:0007669"/>
    <property type="project" value="UniProtKB-KW"/>
</dbReference>
<dbReference type="GO" id="GO:0055085">
    <property type="term" value="P:transmembrane transport"/>
    <property type="evidence" value="ECO:0007669"/>
    <property type="project" value="InterPro"/>
</dbReference>
<dbReference type="Gene3D" id="1.20.1740.10">
    <property type="entry name" value="Amino acid/polyamine transporter I"/>
    <property type="match status" value="1"/>
</dbReference>
<dbReference type="InterPro" id="IPR004841">
    <property type="entry name" value="AA-permease/SLC12A_dom"/>
</dbReference>
<dbReference type="PANTHER" id="PTHR43495">
    <property type="entry name" value="GABA PERMEASE"/>
    <property type="match status" value="1"/>
</dbReference>
<dbReference type="PANTHER" id="PTHR43495:SF5">
    <property type="entry name" value="GAMMA-AMINOBUTYRIC ACID PERMEASE"/>
    <property type="match status" value="1"/>
</dbReference>
<dbReference type="Pfam" id="PF00324">
    <property type="entry name" value="AA_permease"/>
    <property type="match status" value="1"/>
</dbReference>
<dbReference type="PIRSF" id="PIRSF006060">
    <property type="entry name" value="AA_transporter"/>
    <property type="match status" value="1"/>
</dbReference>
<keyword id="KW-0029">Amino-acid transport</keyword>
<keyword id="KW-1003">Cell membrane</keyword>
<keyword id="KW-0472">Membrane</keyword>
<keyword id="KW-1185">Reference proteome</keyword>
<keyword id="KW-0812">Transmembrane</keyword>
<keyword id="KW-1133">Transmembrane helix</keyword>
<keyword id="KW-0813">Transport</keyword>
<proteinExistence type="inferred from homology"/>
<reference key="1">
    <citation type="journal article" date="1996" name="Microbiology">
        <title>The 25 degrees-36 degrees region of the Bacillus subtilis chromosome: determination of the sequence of a 146 kb segment and identification of 113 genes.</title>
        <authorList>
            <person name="Yamane K."/>
            <person name="Kumano M."/>
            <person name="Kurita K."/>
        </authorList>
    </citation>
    <scope>NUCLEOTIDE SEQUENCE [GENOMIC DNA]</scope>
    <source>
        <strain>168</strain>
    </source>
</reference>
<reference key="2">
    <citation type="journal article" date="1997" name="Nature">
        <title>The complete genome sequence of the Gram-positive bacterium Bacillus subtilis.</title>
        <authorList>
            <person name="Kunst F."/>
            <person name="Ogasawara N."/>
            <person name="Moszer I."/>
            <person name="Albertini A.M."/>
            <person name="Alloni G."/>
            <person name="Azevedo V."/>
            <person name="Bertero M.G."/>
            <person name="Bessieres P."/>
            <person name="Bolotin A."/>
            <person name="Borchert S."/>
            <person name="Borriss R."/>
            <person name="Boursier L."/>
            <person name="Brans A."/>
            <person name="Braun M."/>
            <person name="Brignell S.C."/>
            <person name="Bron S."/>
            <person name="Brouillet S."/>
            <person name="Bruschi C.V."/>
            <person name="Caldwell B."/>
            <person name="Capuano V."/>
            <person name="Carter N.M."/>
            <person name="Choi S.-K."/>
            <person name="Codani J.-J."/>
            <person name="Connerton I.F."/>
            <person name="Cummings N.J."/>
            <person name="Daniel R.A."/>
            <person name="Denizot F."/>
            <person name="Devine K.M."/>
            <person name="Duesterhoeft A."/>
            <person name="Ehrlich S.D."/>
            <person name="Emmerson P.T."/>
            <person name="Entian K.-D."/>
            <person name="Errington J."/>
            <person name="Fabret C."/>
            <person name="Ferrari E."/>
            <person name="Foulger D."/>
            <person name="Fritz C."/>
            <person name="Fujita M."/>
            <person name="Fujita Y."/>
            <person name="Fuma S."/>
            <person name="Galizzi A."/>
            <person name="Galleron N."/>
            <person name="Ghim S.-Y."/>
            <person name="Glaser P."/>
            <person name="Goffeau A."/>
            <person name="Golightly E.J."/>
            <person name="Grandi G."/>
            <person name="Guiseppi G."/>
            <person name="Guy B.J."/>
            <person name="Haga K."/>
            <person name="Haiech J."/>
            <person name="Harwood C.R."/>
            <person name="Henaut A."/>
            <person name="Hilbert H."/>
            <person name="Holsappel S."/>
            <person name="Hosono S."/>
            <person name="Hullo M.-F."/>
            <person name="Itaya M."/>
            <person name="Jones L.-M."/>
            <person name="Joris B."/>
            <person name="Karamata D."/>
            <person name="Kasahara Y."/>
            <person name="Klaerr-Blanchard M."/>
            <person name="Klein C."/>
            <person name="Kobayashi Y."/>
            <person name="Koetter P."/>
            <person name="Koningstein G."/>
            <person name="Krogh S."/>
            <person name="Kumano M."/>
            <person name="Kurita K."/>
            <person name="Lapidus A."/>
            <person name="Lardinois S."/>
            <person name="Lauber J."/>
            <person name="Lazarevic V."/>
            <person name="Lee S.-M."/>
            <person name="Levine A."/>
            <person name="Liu H."/>
            <person name="Masuda S."/>
            <person name="Mauel C."/>
            <person name="Medigue C."/>
            <person name="Medina N."/>
            <person name="Mellado R.P."/>
            <person name="Mizuno M."/>
            <person name="Moestl D."/>
            <person name="Nakai S."/>
            <person name="Noback M."/>
            <person name="Noone D."/>
            <person name="O'Reilly M."/>
            <person name="Ogawa K."/>
            <person name="Ogiwara A."/>
            <person name="Oudega B."/>
            <person name="Park S.-H."/>
            <person name="Parro V."/>
            <person name="Pohl T.M."/>
            <person name="Portetelle D."/>
            <person name="Porwollik S."/>
            <person name="Prescott A.M."/>
            <person name="Presecan E."/>
            <person name="Pujic P."/>
            <person name="Purnelle B."/>
            <person name="Rapoport G."/>
            <person name="Rey M."/>
            <person name="Reynolds S."/>
            <person name="Rieger M."/>
            <person name="Rivolta C."/>
            <person name="Rocha E."/>
            <person name="Roche B."/>
            <person name="Rose M."/>
            <person name="Sadaie Y."/>
            <person name="Sato T."/>
            <person name="Scanlan E."/>
            <person name="Schleich S."/>
            <person name="Schroeter R."/>
            <person name="Scoffone F."/>
            <person name="Sekiguchi J."/>
            <person name="Sekowska A."/>
            <person name="Seror S.J."/>
            <person name="Serror P."/>
            <person name="Shin B.-S."/>
            <person name="Soldo B."/>
            <person name="Sorokin A."/>
            <person name="Tacconi E."/>
            <person name="Takagi T."/>
            <person name="Takahashi H."/>
            <person name="Takemaru K."/>
            <person name="Takeuchi M."/>
            <person name="Tamakoshi A."/>
            <person name="Tanaka T."/>
            <person name="Terpstra P."/>
            <person name="Tognoni A."/>
            <person name="Tosato V."/>
            <person name="Uchiyama S."/>
            <person name="Vandenbol M."/>
            <person name="Vannier F."/>
            <person name="Vassarotti A."/>
            <person name="Viari A."/>
            <person name="Wambutt R."/>
            <person name="Wedler E."/>
            <person name="Wedler H."/>
            <person name="Weitzenegger T."/>
            <person name="Winters P."/>
            <person name="Wipat A."/>
            <person name="Yamamoto H."/>
            <person name="Yamane K."/>
            <person name="Yasumoto K."/>
            <person name="Yata K."/>
            <person name="Yoshida K."/>
            <person name="Yoshikawa H.-F."/>
            <person name="Zumstein E."/>
            <person name="Yoshikawa H."/>
            <person name="Danchin A."/>
        </authorList>
    </citation>
    <scope>NUCLEOTIDE SEQUENCE [LARGE SCALE GENOMIC DNA]</scope>
    <source>
        <strain>168</strain>
    </source>
</reference>
<reference key="3">
    <citation type="journal article" date="2009" name="Microbiology">
        <title>From a consortium sequence to a unified sequence: the Bacillus subtilis 168 reference genome a decade later.</title>
        <authorList>
            <person name="Barbe V."/>
            <person name="Cruveiller S."/>
            <person name="Kunst F."/>
            <person name="Lenoble P."/>
            <person name="Meurice G."/>
            <person name="Sekowska A."/>
            <person name="Vallenet D."/>
            <person name="Wang T."/>
            <person name="Moszer I."/>
            <person name="Medigue C."/>
            <person name="Danchin A."/>
        </authorList>
    </citation>
    <scope>SEQUENCE REVISION TO 145; 298; 437 AND N-TERMINUS</scope>
</reference>
<feature type="chain" id="PRO_0000360489" description="Uncharacterized transporter YcgH">
    <location>
        <begin position="1"/>
        <end position="446"/>
    </location>
</feature>
<feature type="transmembrane region" description="Helical" evidence="1">
    <location>
        <begin position="20"/>
        <end position="40"/>
    </location>
</feature>
<feature type="transmembrane region" description="Helical" evidence="1">
    <location>
        <begin position="42"/>
        <end position="62"/>
    </location>
</feature>
<feature type="transmembrane region" description="Helical" evidence="1">
    <location>
        <begin position="95"/>
        <end position="115"/>
    </location>
</feature>
<feature type="transmembrane region" description="Helical" evidence="1">
    <location>
        <begin position="127"/>
        <end position="147"/>
    </location>
</feature>
<feature type="transmembrane region" description="Helical" evidence="1">
    <location>
        <begin position="160"/>
        <end position="180"/>
    </location>
</feature>
<feature type="transmembrane region" description="Helical" evidence="1">
    <location>
        <begin position="205"/>
        <end position="225"/>
    </location>
</feature>
<feature type="transmembrane region" description="Helical" evidence="1">
    <location>
        <begin position="237"/>
        <end position="257"/>
    </location>
</feature>
<feature type="transmembrane region" description="Helical" evidence="1">
    <location>
        <begin position="284"/>
        <end position="304"/>
    </location>
</feature>
<feature type="transmembrane region" description="Helical" evidence="1">
    <location>
        <begin position="331"/>
        <end position="351"/>
    </location>
</feature>
<feature type="transmembrane region" description="Helical" evidence="1">
    <location>
        <begin position="355"/>
        <end position="375"/>
    </location>
</feature>
<feature type="transmembrane region" description="Helical" evidence="1">
    <location>
        <begin position="388"/>
        <end position="408"/>
    </location>
</feature>
<feature type="transmembrane region" description="Helical" evidence="1">
    <location>
        <begin position="414"/>
        <end position="434"/>
    </location>
</feature>
<feature type="sequence conflict" description="In Ref. 1; BAA08945." evidence="2" ref="1">
    <original>S</original>
    <variation>A</variation>
    <location>
        <position position="145"/>
    </location>
</feature>
<feature type="sequence conflict" description="In Ref. 1; BAA08945." evidence="2" ref="1">
    <original>V</original>
    <variation>I</variation>
    <location>
        <position position="298"/>
    </location>
</feature>
<evidence type="ECO:0000255" key="1"/>
<evidence type="ECO:0000305" key="2"/>
<gene>
    <name type="primary">ycgH</name>
    <name type="ordered locus">BSU03110</name>
</gene>
<organism>
    <name type="scientific">Bacillus subtilis (strain 168)</name>
    <dbReference type="NCBI Taxonomy" id="224308"/>
    <lineage>
        <taxon>Bacteria</taxon>
        <taxon>Bacillati</taxon>
        <taxon>Bacillota</taxon>
        <taxon>Bacilli</taxon>
        <taxon>Bacillales</taxon>
        <taxon>Bacillaceae</taxon>
        <taxon>Bacillus</taxon>
    </lineage>
</organism>